<organism>
    <name type="scientific">Escherichia coli O157:H7</name>
    <dbReference type="NCBI Taxonomy" id="83334"/>
    <lineage>
        <taxon>Bacteria</taxon>
        <taxon>Pseudomonadati</taxon>
        <taxon>Pseudomonadota</taxon>
        <taxon>Gammaproteobacteria</taxon>
        <taxon>Enterobacterales</taxon>
        <taxon>Enterobacteriaceae</taxon>
        <taxon>Escherichia</taxon>
    </lineage>
</organism>
<feature type="initiator methionine" description="Removed" evidence="1">
    <location>
        <position position="1"/>
    </location>
</feature>
<feature type="chain" id="PRO_0000184515" description="D-cysteine desulfhydrase">
    <location>
        <begin position="2"/>
        <end position="328"/>
    </location>
</feature>
<feature type="modified residue" description="N6-(pyridoxal phosphate)lysine" evidence="2">
    <location>
        <position position="51"/>
    </location>
</feature>
<reference key="1">
    <citation type="journal article" date="2001" name="Nature">
        <title>Genome sequence of enterohaemorrhagic Escherichia coli O157:H7.</title>
        <authorList>
            <person name="Perna N.T."/>
            <person name="Plunkett G. III"/>
            <person name="Burland V."/>
            <person name="Mau B."/>
            <person name="Glasner J.D."/>
            <person name="Rose D.J."/>
            <person name="Mayhew G.F."/>
            <person name="Evans P.S."/>
            <person name="Gregor J."/>
            <person name="Kirkpatrick H.A."/>
            <person name="Posfai G."/>
            <person name="Hackett J."/>
            <person name="Klink S."/>
            <person name="Boutin A."/>
            <person name="Shao Y."/>
            <person name="Miller L."/>
            <person name="Grotbeck E.J."/>
            <person name="Davis N.W."/>
            <person name="Lim A."/>
            <person name="Dimalanta E.T."/>
            <person name="Potamousis K."/>
            <person name="Apodaca J."/>
            <person name="Anantharaman T.S."/>
            <person name="Lin J."/>
            <person name="Yen G."/>
            <person name="Schwartz D.C."/>
            <person name="Welch R.A."/>
            <person name="Blattner F.R."/>
        </authorList>
    </citation>
    <scope>NUCLEOTIDE SEQUENCE [LARGE SCALE GENOMIC DNA]</scope>
    <source>
        <strain>O157:H7 / EDL933 / ATCC 700927 / EHEC</strain>
    </source>
</reference>
<reference key="2">
    <citation type="journal article" date="2001" name="DNA Res.">
        <title>Complete genome sequence of enterohemorrhagic Escherichia coli O157:H7 and genomic comparison with a laboratory strain K-12.</title>
        <authorList>
            <person name="Hayashi T."/>
            <person name="Makino K."/>
            <person name="Ohnishi M."/>
            <person name="Kurokawa K."/>
            <person name="Ishii K."/>
            <person name="Yokoyama K."/>
            <person name="Han C.-G."/>
            <person name="Ohtsubo E."/>
            <person name="Nakayama K."/>
            <person name="Murata T."/>
            <person name="Tanaka M."/>
            <person name="Tobe T."/>
            <person name="Iida T."/>
            <person name="Takami H."/>
            <person name="Honda T."/>
            <person name="Sasakawa C."/>
            <person name="Ogasawara N."/>
            <person name="Yasunaga T."/>
            <person name="Kuhara S."/>
            <person name="Shiba T."/>
            <person name="Hattori M."/>
            <person name="Shinagawa H."/>
        </authorList>
    </citation>
    <scope>NUCLEOTIDE SEQUENCE [LARGE SCALE GENOMIC DNA]</scope>
    <source>
        <strain>O157:H7 / Sakai / RIMD 0509952 / EHEC</strain>
    </source>
</reference>
<comment type="function">
    <text evidence="2">Catalyzes the alpha,beta-elimination reaction of D-cysteine and of several D-cysteine derivatives. It could be a defense mechanism against D-cysteine.</text>
</comment>
<comment type="catalytic activity">
    <reaction evidence="2">
        <text>D-cysteine + H2O = hydrogen sulfide + pyruvate + NH4(+) + H(+)</text>
        <dbReference type="Rhea" id="RHEA:11268"/>
        <dbReference type="ChEBI" id="CHEBI:15361"/>
        <dbReference type="ChEBI" id="CHEBI:15377"/>
        <dbReference type="ChEBI" id="CHEBI:15378"/>
        <dbReference type="ChEBI" id="CHEBI:28938"/>
        <dbReference type="ChEBI" id="CHEBI:29919"/>
        <dbReference type="ChEBI" id="CHEBI:35236"/>
        <dbReference type="EC" id="4.4.1.15"/>
    </reaction>
</comment>
<comment type="cofactor">
    <cofactor evidence="2">
        <name>pyridoxal 5'-phosphate</name>
        <dbReference type="ChEBI" id="CHEBI:597326"/>
    </cofactor>
</comment>
<comment type="subunit">
    <text evidence="2">Homodimer.</text>
</comment>
<comment type="similarity">
    <text evidence="2">Belongs to the ACC deaminase/D-cysteine desulfhydrase family.</text>
</comment>
<comment type="sequence caution" evidence="3">
    <conflict type="erroneous initiation">
        <sequence resource="EMBL-CDS" id="AAG56934"/>
    </conflict>
</comment>
<comment type="sequence caution" evidence="3">
    <conflict type="frameshift">
        <sequence resource="EMBL-CDS" id="BAB36080"/>
    </conflict>
    <text>Produces two separate ORFs.</text>
</comment>
<comment type="sequence caution" evidence="3">
    <conflict type="frameshift">
        <sequence resource="EMBL-CDS" id="BAB36081"/>
    </conflict>
    <text>Produces two separate ORFs.</text>
</comment>
<proteinExistence type="inferred from homology"/>
<name>DCYD_ECO57</name>
<sequence>MPLHNLTRFPRLEFIGAPTPLEYLPRFSDYLGREIFIKRDDVTPMAMGGNKLRKLEFLAADALREGADTLITAGAIQSNHVRQTAAVAAKLGLHCVALLENPIGTTAENYLTNGNRLLLDLFNTQIEMCDALTDPNAQLEELATRVEAQGFRPYVIPVGGSNALGALGYVESALEIAQQCEGAVNISSVVVASGSAGTHAGLAVGLEHLMPESELIGVTVSRSVADQLPKVVNLQQAIAKELELTASVEILLWDDYFAPGYGVPNDEGMEAVKLLARLEGILLDPVYTGKAMAGLIDGISQKRFKDEGPILFIHTGGAPALFAYHPHV</sequence>
<keyword id="KW-0456">Lyase</keyword>
<keyword id="KW-0663">Pyridoxal phosphate</keyword>
<keyword id="KW-1185">Reference proteome</keyword>
<dbReference type="EC" id="4.4.1.15" evidence="2"/>
<dbReference type="EMBL" id="AE005174">
    <property type="protein sequence ID" value="AAG56934.1"/>
    <property type="status" value="ALT_INIT"/>
    <property type="molecule type" value="Genomic_DNA"/>
</dbReference>
<dbReference type="EMBL" id="BA000007">
    <property type="protein sequence ID" value="BAB36080.1"/>
    <property type="status" value="ALT_FRAME"/>
    <property type="molecule type" value="Genomic_DNA"/>
</dbReference>
<dbReference type="EMBL" id="BA000007">
    <property type="protein sequence ID" value="BAB36081.1"/>
    <property type="status" value="ALT_FRAME"/>
    <property type="molecule type" value="Genomic_DNA"/>
</dbReference>
<dbReference type="PIR" id="A90961">
    <property type="entry name" value="A90961"/>
</dbReference>
<dbReference type="PIR" id="B85809">
    <property type="entry name" value="B85809"/>
</dbReference>
<dbReference type="PIR" id="B90961">
    <property type="entry name" value="B90961"/>
</dbReference>
<dbReference type="RefSeq" id="WP_001128225.1">
    <property type="nucleotide sequence ID" value="NZ_VOAI01000028.1"/>
</dbReference>
<dbReference type="SMR" id="Q8XBC7"/>
<dbReference type="STRING" id="155864.Z3008"/>
<dbReference type="KEGG" id="ece:Z3008"/>
<dbReference type="PATRIC" id="fig|83334.175.peg.615"/>
<dbReference type="eggNOG" id="COG2515">
    <property type="taxonomic scope" value="Bacteria"/>
</dbReference>
<dbReference type="HOGENOM" id="CLU_163716_0_0_6"/>
<dbReference type="OMA" id="ERYHAGT"/>
<dbReference type="Proteomes" id="UP000000558">
    <property type="component" value="Chromosome"/>
</dbReference>
<dbReference type="Proteomes" id="UP000002519">
    <property type="component" value="Chromosome"/>
</dbReference>
<dbReference type="GO" id="GO:0019148">
    <property type="term" value="F:D-cysteine desulfhydrase activity"/>
    <property type="evidence" value="ECO:0007669"/>
    <property type="project" value="UniProtKB-UniRule"/>
</dbReference>
<dbReference type="GO" id="GO:0046416">
    <property type="term" value="P:D-amino acid metabolic process"/>
    <property type="evidence" value="ECO:0007669"/>
    <property type="project" value="UniProtKB-UniRule"/>
</dbReference>
<dbReference type="CDD" id="cd06449">
    <property type="entry name" value="ACCD"/>
    <property type="match status" value="1"/>
</dbReference>
<dbReference type="FunFam" id="3.40.50.1100:FF:000019">
    <property type="entry name" value="D-cysteine desulfhydrase"/>
    <property type="match status" value="1"/>
</dbReference>
<dbReference type="Gene3D" id="3.40.50.1100">
    <property type="match status" value="2"/>
</dbReference>
<dbReference type="HAMAP" id="MF_01045">
    <property type="entry name" value="D_Cys_desulfhydr"/>
    <property type="match status" value="1"/>
</dbReference>
<dbReference type="InterPro" id="IPR027278">
    <property type="entry name" value="ACCD_DCysDesulf"/>
</dbReference>
<dbReference type="InterPro" id="IPR005966">
    <property type="entry name" value="D-Cys_desShydrase"/>
</dbReference>
<dbReference type="InterPro" id="IPR023702">
    <property type="entry name" value="D_Cys_desulphydr_bac"/>
</dbReference>
<dbReference type="InterPro" id="IPR001926">
    <property type="entry name" value="TrpB-like_PALP"/>
</dbReference>
<dbReference type="InterPro" id="IPR036052">
    <property type="entry name" value="TrpB-like_PALP_sf"/>
</dbReference>
<dbReference type="NCBIfam" id="TIGR01275">
    <property type="entry name" value="ACC_deam_rel"/>
    <property type="match status" value="1"/>
</dbReference>
<dbReference type="NCBIfam" id="NF003029">
    <property type="entry name" value="PRK03910.1-1"/>
    <property type="match status" value="1"/>
</dbReference>
<dbReference type="NCBIfam" id="NF003030">
    <property type="entry name" value="PRK03910.1-3"/>
    <property type="match status" value="1"/>
</dbReference>
<dbReference type="NCBIfam" id="NF003032">
    <property type="entry name" value="PRK03910.1-5"/>
    <property type="match status" value="1"/>
</dbReference>
<dbReference type="PANTHER" id="PTHR43780">
    <property type="entry name" value="1-AMINOCYCLOPROPANE-1-CARBOXYLATE DEAMINASE-RELATED"/>
    <property type="match status" value="1"/>
</dbReference>
<dbReference type="PANTHER" id="PTHR43780:SF2">
    <property type="entry name" value="1-AMINOCYCLOPROPANE-1-CARBOXYLATE DEAMINASE-RELATED"/>
    <property type="match status" value="1"/>
</dbReference>
<dbReference type="Pfam" id="PF00291">
    <property type="entry name" value="PALP"/>
    <property type="match status" value="1"/>
</dbReference>
<dbReference type="PIRSF" id="PIRSF006278">
    <property type="entry name" value="ACCD_DCysDesulf"/>
    <property type="match status" value="1"/>
</dbReference>
<dbReference type="SUPFAM" id="SSF53686">
    <property type="entry name" value="Tryptophan synthase beta subunit-like PLP-dependent enzymes"/>
    <property type="match status" value="1"/>
</dbReference>
<protein>
    <recommendedName>
        <fullName evidence="2">D-cysteine desulfhydrase</fullName>
        <ecNumber evidence="2">4.4.1.15</ecNumber>
    </recommendedName>
</protein>
<evidence type="ECO:0000250" key="1"/>
<evidence type="ECO:0000255" key="2">
    <source>
        <dbReference type="HAMAP-Rule" id="MF_01045"/>
    </source>
</evidence>
<evidence type="ECO:0000305" key="3"/>
<accession>Q8XBC7</accession>
<accession>Q8X2H0</accession>
<accession>Q8X2H1</accession>
<gene>
    <name evidence="2" type="primary">dcyD</name>
    <name type="ordered locus">Z3008</name>
    <name type="ordered locus">ECs2657/ECs2658</name>
</gene>